<reference key="1">
    <citation type="journal article" date="2005" name="Nucleic Acids Res.">
        <title>Genome dynamics and diversity of Shigella species, the etiologic agents of bacillary dysentery.</title>
        <authorList>
            <person name="Yang F."/>
            <person name="Yang J."/>
            <person name="Zhang X."/>
            <person name="Chen L."/>
            <person name="Jiang Y."/>
            <person name="Yan Y."/>
            <person name="Tang X."/>
            <person name="Wang J."/>
            <person name="Xiong Z."/>
            <person name="Dong J."/>
            <person name="Xue Y."/>
            <person name="Zhu Y."/>
            <person name="Xu X."/>
            <person name="Sun L."/>
            <person name="Chen S."/>
            <person name="Nie H."/>
            <person name="Peng J."/>
            <person name="Xu J."/>
            <person name="Wang Y."/>
            <person name="Yuan Z."/>
            <person name="Wen Y."/>
            <person name="Yao Z."/>
            <person name="Shen Y."/>
            <person name="Qiang B."/>
            <person name="Hou Y."/>
            <person name="Yu J."/>
            <person name="Jin Q."/>
        </authorList>
    </citation>
    <scope>NUCLEOTIDE SEQUENCE [LARGE SCALE GENOMIC DNA]</scope>
    <source>
        <strain>Sd197</strain>
    </source>
</reference>
<keyword id="KW-1003">Cell membrane</keyword>
<keyword id="KW-0472">Membrane</keyword>
<keyword id="KW-1185">Reference proteome</keyword>
<keyword id="KW-0812">Transmembrane</keyword>
<keyword id="KW-1133">Transmembrane helix</keyword>
<organism>
    <name type="scientific">Shigella dysenteriae serotype 1 (strain Sd197)</name>
    <dbReference type="NCBI Taxonomy" id="300267"/>
    <lineage>
        <taxon>Bacteria</taxon>
        <taxon>Pseudomonadati</taxon>
        <taxon>Pseudomonadota</taxon>
        <taxon>Gammaproteobacteria</taxon>
        <taxon>Enterobacterales</taxon>
        <taxon>Enterobacteriaceae</taxon>
        <taxon>Shigella</taxon>
    </lineage>
</organism>
<protein>
    <recommendedName>
        <fullName evidence="1">UPF0114 protein YqhA</fullName>
    </recommendedName>
</protein>
<feature type="chain" id="PRO_1000009500" description="UPF0114 protein YqhA">
    <location>
        <begin position="1"/>
        <end position="164"/>
    </location>
</feature>
<feature type="transmembrane region" description="Helical" evidence="1">
    <location>
        <begin position="15"/>
        <end position="35"/>
    </location>
</feature>
<feature type="transmembrane region" description="Helical" evidence="1">
    <location>
        <begin position="53"/>
        <end position="73"/>
    </location>
</feature>
<feature type="transmembrane region" description="Helical" evidence="1">
    <location>
        <begin position="136"/>
        <end position="156"/>
    </location>
</feature>
<sequence length="164" mass="18640">MERFLENAMYASRWLLAPVYFGLSLALVALALKFFQEIIHVLPNIFSMAESDLILVLLSLVDMTLVGGLLVMVMFSGYENFVSQLDISKNKEKLNWLGKMDATSLKNKVAASIVAISSIHLLRVFMDAKNVPDNKLMWYVIIHLTFVLSAFVMGYLDRLTRHNH</sequence>
<accession>Q32C68</accession>
<gene>
    <name evidence="1" type="primary">yqhA</name>
    <name type="ordered locus">SDY_3070</name>
</gene>
<evidence type="ECO:0000255" key="1">
    <source>
        <dbReference type="HAMAP-Rule" id="MF_00143"/>
    </source>
</evidence>
<dbReference type="EMBL" id="CP000034">
    <property type="protein sequence ID" value="ABB63087.1"/>
    <property type="molecule type" value="Genomic_DNA"/>
</dbReference>
<dbReference type="RefSeq" id="WP_005018224.1">
    <property type="nucleotide sequence ID" value="NC_007606.1"/>
</dbReference>
<dbReference type="RefSeq" id="YP_404578.1">
    <property type="nucleotide sequence ID" value="NC_007606.1"/>
</dbReference>
<dbReference type="EnsemblBacteria" id="ABB63087">
    <property type="protein sequence ID" value="ABB63087"/>
    <property type="gene ID" value="SDY_3070"/>
</dbReference>
<dbReference type="KEGG" id="sdy:SDY_3070"/>
<dbReference type="PATRIC" id="fig|300267.13.peg.3675"/>
<dbReference type="HOGENOM" id="CLU_097887_1_1_6"/>
<dbReference type="Proteomes" id="UP000002716">
    <property type="component" value="Chromosome"/>
</dbReference>
<dbReference type="GO" id="GO:0005886">
    <property type="term" value="C:plasma membrane"/>
    <property type="evidence" value="ECO:0007669"/>
    <property type="project" value="UniProtKB-SubCell"/>
</dbReference>
<dbReference type="HAMAP" id="MF_00143">
    <property type="entry name" value="UPF0114"/>
    <property type="match status" value="1"/>
</dbReference>
<dbReference type="InterPro" id="IPR005134">
    <property type="entry name" value="UPF0114"/>
</dbReference>
<dbReference type="InterPro" id="IPR020761">
    <property type="entry name" value="UPF0114_bac"/>
</dbReference>
<dbReference type="NCBIfam" id="TIGR00645">
    <property type="entry name" value="HI0507"/>
    <property type="match status" value="1"/>
</dbReference>
<dbReference type="PANTHER" id="PTHR38596">
    <property type="entry name" value="UPF0114 PROTEIN YQHA"/>
    <property type="match status" value="1"/>
</dbReference>
<dbReference type="PANTHER" id="PTHR38596:SF1">
    <property type="entry name" value="UPF0114 PROTEIN YQHA"/>
    <property type="match status" value="1"/>
</dbReference>
<dbReference type="Pfam" id="PF03350">
    <property type="entry name" value="UPF0114"/>
    <property type="match status" value="1"/>
</dbReference>
<proteinExistence type="inferred from homology"/>
<name>YQHA_SHIDS</name>
<comment type="subcellular location">
    <subcellularLocation>
        <location evidence="1">Cell membrane</location>
        <topology evidence="1">Multi-pass membrane protein</topology>
    </subcellularLocation>
</comment>
<comment type="similarity">
    <text evidence="1">Belongs to the UPF0114 family.</text>
</comment>